<keyword id="KW-0131">Cell cycle</keyword>
<keyword id="KW-0132">Cell division</keyword>
<keyword id="KW-0137">Centromere</keyword>
<keyword id="KW-0158">Chromosome</keyword>
<keyword id="KW-0238">DNA-binding</keyword>
<keyword id="KW-0995">Kinetochore</keyword>
<keyword id="KW-0498">Mitosis</keyword>
<keyword id="KW-0539">Nucleus</keyword>
<keyword id="KW-0597">Phosphoprotein</keyword>
<keyword id="KW-1185">Reference proteome</keyword>
<sequence>MADHNPDGDPTPRTLLRRVLDTADPRTPRRPRSARAGAQRALLETASSRRLSGQTKTIAKGRSRGARSIGRSAHVQARGHLEEQTPRTLLKNILLTAPESSILMPESVVKPVPAPQVVQPSRRESSRGSLELQLPELEPSTTLAPGLLAPGRRKQRLRLSMFQQGVDQGLPLSQEPQGNADASSLTSSLNLTFATPLQPQSVQRPGLARRPPARRAVDVGAFLRDLRDTSLAPPNIVLEDTQPFSQPTVGSPNVYHSLPCTPHTGAEDAEQAAGRRTQSSGPGLQNNSPGKPAQFLAGEAEEVDAFALGFLSTSSGVSGEDEVEPLHNGVEEAEKKMKEEGVSVSEMEATGAQGPSRAEEPEGHTQVTEAEGSQGTAEAEGPGASSGDEDASSRAASPELASSTPESLQARRHHQFPEPAPPPGAAVLSSEPAEPLLVRCPPRSRTTGPRPRQDPHKAGLSHYVKLFSFFAKMPMERKALEMVEKCLDKYFQHLCDDLEVFAAHAGRKTVKPEDLELLMRRQGLVTDQVSLHVLVERHLPLEYRQLLIPCAYSGNSVFPAQ</sequence>
<dbReference type="EMBL" id="AB168863">
    <property type="protein sequence ID" value="BAE00967.1"/>
    <property type="molecule type" value="mRNA"/>
</dbReference>
<dbReference type="EMBL" id="AB169445">
    <property type="protein sequence ID" value="BAE01527.1"/>
    <property type="molecule type" value="mRNA"/>
</dbReference>
<dbReference type="RefSeq" id="NP_001271777.1">
    <property type="nucleotide sequence ID" value="NM_001284848.1"/>
</dbReference>
<dbReference type="RefSeq" id="XP_045238591.1">
    <property type="nucleotide sequence ID" value="XM_045382656.2"/>
</dbReference>
<dbReference type="SMR" id="Q4R5U8"/>
<dbReference type="STRING" id="9541.ENSMFAP00000009475"/>
<dbReference type="GeneID" id="101926328"/>
<dbReference type="eggNOG" id="ENOG502RZH1">
    <property type="taxonomic scope" value="Eukaryota"/>
</dbReference>
<dbReference type="Proteomes" id="UP000233100">
    <property type="component" value="Unplaced"/>
</dbReference>
<dbReference type="GO" id="GO:0000775">
    <property type="term" value="C:chromosome, centromeric region"/>
    <property type="evidence" value="ECO:0000250"/>
    <property type="project" value="UniProtKB"/>
</dbReference>
<dbReference type="GO" id="GO:0000776">
    <property type="term" value="C:kinetochore"/>
    <property type="evidence" value="ECO:0007669"/>
    <property type="project" value="UniProtKB-KW"/>
</dbReference>
<dbReference type="GO" id="GO:0005634">
    <property type="term" value="C:nucleus"/>
    <property type="evidence" value="ECO:0007669"/>
    <property type="project" value="UniProtKB-SubCell"/>
</dbReference>
<dbReference type="GO" id="GO:0003677">
    <property type="term" value="F:DNA binding"/>
    <property type="evidence" value="ECO:0007669"/>
    <property type="project" value="UniProtKB-KW"/>
</dbReference>
<dbReference type="GO" id="GO:0046982">
    <property type="term" value="F:protein heterodimerization activity"/>
    <property type="evidence" value="ECO:0007669"/>
    <property type="project" value="InterPro"/>
</dbReference>
<dbReference type="GO" id="GO:0051301">
    <property type="term" value="P:cell division"/>
    <property type="evidence" value="ECO:0007669"/>
    <property type="project" value="UniProtKB-KW"/>
</dbReference>
<dbReference type="GO" id="GO:0051276">
    <property type="term" value="P:chromosome organization"/>
    <property type="evidence" value="ECO:0000250"/>
    <property type="project" value="UniProtKB"/>
</dbReference>
<dbReference type="GO" id="GO:0007059">
    <property type="term" value="P:chromosome segregation"/>
    <property type="evidence" value="ECO:0000250"/>
    <property type="project" value="UniProtKB"/>
</dbReference>
<dbReference type="GO" id="GO:0051382">
    <property type="term" value="P:kinetochore assembly"/>
    <property type="evidence" value="ECO:0000250"/>
    <property type="project" value="UniProtKB"/>
</dbReference>
<dbReference type="GO" id="GO:0000278">
    <property type="term" value="P:mitotic cell cycle"/>
    <property type="evidence" value="ECO:0000250"/>
    <property type="project" value="UniProtKB"/>
</dbReference>
<dbReference type="CDD" id="cd22920">
    <property type="entry name" value="HFD_CENP-T"/>
    <property type="match status" value="1"/>
</dbReference>
<dbReference type="FunFam" id="1.10.20.10:FF:000050">
    <property type="entry name" value="centromere protein T isoform X2"/>
    <property type="match status" value="1"/>
</dbReference>
<dbReference type="Gene3D" id="1.10.20.10">
    <property type="entry name" value="Histone, subunit A"/>
    <property type="match status" value="1"/>
</dbReference>
<dbReference type="InterPro" id="IPR028255">
    <property type="entry name" value="CENP-T"/>
</dbReference>
<dbReference type="InterPro" id="IPR035425">
    <property type="entry name" value="CENP-T/H4_C"/>
</dbReference>
<dbReference type="InterPro" id="IPR032373">
    <property type="entry name" value="CENP-T_N"/>
</dbReference>
<dbReference type="InterPro" id="IPR009072">
    <property type="entry name" value="Histone-fold"/>
</dbReference>
<dbReference type="PANTHER" id="PTHR46904">
    <property type="entry name" value="CENTROMERE PROTEIN T"/>
    <property type="match status" value="1"/>
</dbReference>
<dbReference type="PANTHER" id="PTHR46904:SF1">
    <property type="entry name" value="CENTROMERE PROTEIN T"/>
    <property type="match status" value="1"/>
</dbReference>
<dbReference type="Pfam" id="PF15511">
    <property type="entry name" value="CENP-T_C"/>
    <property type="match status" value="1"/>
</dbReference>
<dbReference type="Pfam" id="PF16171">
    <property type="entry name" value="CENP-T_N"/>
    <property type="match status" value="2"/>
</dbReference>
<dbReference type="SUPFAM" id="SSF47113">
    <property type="entry name" value="Histone-fold"/>
    <property type="match status" value="1"/>
</dbReference>
<organism>
    <name type="scientific">Macaca fascicularis</name>
    <name type="common">Crab-eating macaque</name>
    <name type="synonym">Cynomolgus monkey</name>
    <dbReference type="NCBI Taxonomy" id="9541"/>
    <lineage>
        <taxon>Eukaryota</taxon>
        <taxon>Metazoa</taxon>
        <taxon>Chordata</taxon>
        <taxon>Craniata</taxon>
        <taxon>Vertebrata</taxon>
        <taxon>Euteleostomi</taxon>
        <taxon>Mammalia</taxon>
        <taxon>Eutheria</taxon>
        <taxon>Euarchontoglires</taxon>
        <taxon>Primates</taxon>
        <taxon>Haplorrhini</taxon>
        <taxon>Catarrhini</taxon>
        <taxon>Cercopithecidae</taxon>
        <taxon>Cercopithecinae</taxon>
        <taxon>Macaca</taxon>
    </lineage>
</organism>
<reference key="1">
    <citation type="submission" date="2005-06" db="EMBL/GenBank/DDBJ databases">
        <title>DNA sequences of macaque genes expressed in brain or testis and its evolutionary implications.</title>
        <authorList>
            <consortium name="International consortium for macaque cDNA sequencing and analysis"/>
        </authorList>
    </citation>
    <scope>NUCLEOTIDE SEQUENCE [LARGE SCALE MRNA]</scope>
    <source>
        <tissue>Testis</tissue>
    </source>
</reference>
<protein>
    <recommendedName>
        <fullName>Centromere protein T</fullName>
        <shortName>CENP-T</shortName>
    </recommendedName>
</protein>
<accession>Q4R5U8</accession>
<accession>Q4R7F5</accession>
<evidence type="ECO:0000250" key="1"/>
<evidence type="ECO:0000250" key="2">
    <source>
        <dbReference type="UniProtKB" id="Q561R1"/>
    </source>
</evidence>
<evidence type="ECO:0000250" key="3">
    <source>
        <dbReference type="UniProtKB" id="Q96BT3"/>
    </source>
</evidence>
<evidence type="ECO:0000256" key="4">
    <source>
        <dbReference type="SAM" id="MobiDB-lite"/>
    </source>
</evidence>
<evidence type="ECO:0000305" key="5"/>
<name>CENPT_MACFA</name>
<feature type="chain" id="PRO_0000249515" description="Centromere protein T">
    <location>
        <begin position="1"/>
        <end position="561"/>
    </location>
</feature>
<feature type="region of interest" description="Disordered" evidence="4">
    <location>
        <begin position="1"/>
        <end position="78"/>
    </location>
</feature>
<feature type="region of interest" description="Flexible stalk domain" evidence="1">
    <location>
        <begin position="93"/>
        <end position="421"/>
    </location>
</feature>
<feature type="region of interest" description="Disordered" evidence="4">
    <location>
        <begin position="114"/>
        <end position="134"/>
    </location>
</feature>
<feature type="region of interest" description="Disordered" evidence="4">
    <location>
        <begin position="256"/>
        <end position="293"/>
    </location>
</feature>
<feature type="region of interest" description="Disordered" evidence="4">
    <location>
        <begin position="314"/>
        <end position="457"/>
    </location>
</feature>
<feature type="compositionally biased region" description="Basic and acidic residues" evidence="4">
    <location>
        <begin position="18"/>
        <end position="27"/>
    </location>
</feature>
<feature type="compositionally biased region" description="Polar residues" evidence="4">
    <location>
        <begin position="45"/>
        <end position="57"/>
    </location>
</feature>
<feature type="compositionally biased region" description="Polar residues" evidence="4">
    <location>
        <begin position="276"/>
        <end position="289"/>
    </location>
</feature>
<feature type="compositionally biased region" description="Basic and acidic residues" evidence="4">
    <location>
        <begin position="329"/>
        <end position="341"/>
    </location>
</feature>
<feature type="compositionally biased region" description="Polar residues" evidence="4">
    <location>
        <begin position="365"/>
        <end position="376"/>
    </location>
</feature>
<feature type="compositionally biased region" description="Low complexity" evidence="4">
    <location>
        <begin position="439"/>
        <end position="450"/>
    </location>
</feature>
<feature type="modified residue" description="Phosphoserine" evidence="3">
    <location>
        <position position="47"/>
    </location>
</feature>
<feature type="modified residue" description="Phosphothreonine" evidence="3">
    <location>
        <position position="85"/>
    </location>
</feature>
<feature type="modified residue" description="Phosphoserine" evidence="3">
    <location>
        <position position="343"/>
    </location>
</feature>
<feature type="modified residue" description="Phosphoserine" evidence="2">
    <location>
        <position position="345"/>
    </location>
</feature>
<feature type="modified residue" description="Phosphoserine" evidence="2">
    <location>
        <position position="356"/>
    </location>
</feature>
<feature type="modified residue" description="Phosphoserine" evidence="3">
    <location>
        <position position="373"/>
    </location>
</feature>
<feature type="modified residue" description="Phosphoserine" evidence="3">
    <location>
        <position position="385"/>
    </location>
</feature>
<feature type="modified residue" description="Phosphoserine" evidence="3">
    <location>
        <position position="386"/>
    </location>
</feature>
<feature type="modified residue" description="Phosphoserine" evidence="3">
    <location>
        <position position="397"/>
    </location>
</feature>
<feature type="sequence conflict" description="In Ref. 1; BAE00967." evidence="5" ref="1">
    <original>P</original>
    <variation>L</variation>
    <location>
        <position position="115"/>
    </location>
</feature>
<gene>
    <name type="primary">CENPT</name>
    <name type="ORF">QtsA-15444</name>
    <name type="ORF">QtsA-20687</name>
</gene>
<comment type="function">
    <text evidence="3">Component of the CENPA-NAC (nucleosome-associated) complex, a complex that plays a central role in assembly of kinetochore proteins, mitotic progression and chromosome segregation. The CENPA-NAC complex recruits the CENPA-CAD (nucleosome distal) complex and may be involved in incorporation of newly synthesized CENPA into centromeres. Part of a nucleosome-associated complex that binds specifically to histone H3-containing nucleosomes at the centromere, as opposed to nucleosomes containing CENPA. Component of the heterotetrameric CENP-T-W-S-X complex that binds and supercoils DNA, and plays an important role in kinetochore assembly. CENPT has a fundamental role in kinetochore assembly and function. It is one of the inner kinetochore proteins, with most further proteins binding downstream. Required for normal chromosome organization and normal progress through mitosis.</text>
</comment>
<comment type="subunit">
    <text evidence="3">Component of the CENPA-CAD complex, composed of CENPI, CENPK, CENPL, CENPO, CENPP, CENPQ, CENPR and CENPS. The CENPA-CAD complex is probably recruited on centromeres by the CENPA-NAC complex, at least composed of CENPA, CENPC, CENPH, CENPM, CENPN, CENPT and CENPU. Identified in a centromeric complex containing histones H2A, H2B, H3 and H4, and at least CENPA, CENPB, CENPC, CENPT, CENPN, HJURP, SUPT16H, SSRP1 and RSF1. Interacts (via N-terminus) with the NDC80 complex. Heterodimer with CENPW; this dimer coassembles with CENPS-CENPX heterodimers at centromeres to form the tetrameric CENP-T-W-S-X complex.</text>
</comment>
<comment type="subcellular location">
    <subcellularLocation>
        <location evidence="3">Nucleus</location>
    </subcellularLocation>
    <subcellularLocation>
        <location evidence="3">Chromosome</location>
        <location evidence="3">Centromere</location>
    </subcellularLocation>
    <subcellularLocation>
        <location evidence="3">Chromosome</location>
        <location evidence="3">Centromere</location>
        <location evidence="3">Kinetochore</location>
    </subcellularLocation>
    <text evidence="3">Constitutively localizes to centromeres throughout the cell cycle, and to kinetochores during mitosis. Localizes to the inner kinetochore, and may connect it to the outer kinetochore via its N-terminus.</text>
</comment>
<comment type="domain">
    <text evidence="1">The largest part of the sequence forms an elongated and flexible stalk structure that is connected to a C-terminal globular domain with a histone-type fold.</text>
</comment>
<comment type="PTM">
    <text evidence="3">Dynamically phosphorylated during the cell cycle. Phosphorylated during G2 phase, metaphase and anaphase, but not during telophase or G1 phase.</text>
</comment>
<comment type="similarity">
    <text evidence="5">Belongs to the CENP-T/CNN1 family.</text>
</comment>
<proteinExistence type="evidence at transcript level"/>